<sequence length="148" mass="15800">MGFTEKQEALVNASYEAFKQNLPGNSVLFYSFILEKAPAAKGMFSFLKDSDGVPQNNPSLQAHAEKVFGLVRDSAAQLRATGVVVLADASLGSVHVQKGVLDPHFVVVKEALLKTLKEAAGATWSDEVSNAWEVAYDGLSAAIKKAMS</sequence>
<reference key="1">
    <citation type="journal article" date="1988" name="Mol. Gen. Genet.">
        <title>Primary structure and promoter analysis of leghemoglobin genes of the stem-nodulated tropical legume Sesbania rostrata: conserved coding sequences, cis-elements and trans-acting factors.</title>
        <authorList>
            <person name="Metz B.A."/>
            <person name="Welters P."/>
            <person name="Hoffmann H.J."/>
            <person name="Jensen E.O."/>
            <person name="Schell J."/>
            <person name="de Bruijn F.J."/>
        </authorList>
    </citation>
    <scope>NUCLEOTIDE SEQUENCE [GENOMIC DNA]</scope>
    <scope>TISSUE SPECIFICITY</scope>
    <source>
        <tissue>Leaf</tissue>
        <tissue>Stem nodule</tissue>
    </source>
</reference>
<reference key="2">
    <citation type="submission" date="1992-05" db="EMBL/GenBank/DDBJ databases">
        <authorList>
            <person name="Welters P."/>
            <person name="Metz B."/>
            <person name="Schell J."/>
            <person name="de Bruijn F.J."/>
        </authorList>
    </citation>
    <scope>NUCLEOTIDE SEQUENCE [GENOMIC DNA]</scope>
</reference>
<reference key="3">
    <citation type="journal article" date="1987" name="Biochem. Int.">
        <title>The amino acid sequence of leghemoglobin II from Sesbania rostrata stem nodules.</title>
        <authorList>
            <person name="Kortt A.A."/>
            <person name="Strike P.M."/>
            <person name="Bogusz D."/>
            <person name="Appleby C.A."/>
        </authorList>
    </citation>
    <scope>PROTEIN SEQUENCE OF 2-148</scope>
    <source>
        <tissue>Stem nodule</tissue>
    </source>
</reference>
<proteinExistence type="evidence at protein level"/>
<accession>P14848</accession>
<keyword id="KW-0963">Cytoplasm</keyword>
<keyword id="KW-0903">Direct protein sequencing</keyword>
<keyword id="KW-0349">Heme</keyword>
<keyword id="KW-0408">Iron</keyword>
<keyword id="KW-0479">Metal-binding</keyword>
<keyword id="KW-0944">Nitration</keyword>
<keyword id="KW-0535">Nitrogen fixation</keyword>
<keyword id="KW-0536">Nodulation</keyword>
<keyword id="KW-0539">Nucleus</keyword>
<keyword id="KW-0561">Oxygen transport</keyword>
<keyword id="KW-0597">Phosphoprotein</keyword>
<keyword id="KW-0813">Transport</keyword>
<evidence type="ECO:0000250" key="1">
    <source>
        <dbReference type="UniProtKB" id="P02234"/>
    </source>
</evidence>
<evidence type="ECO:0000250" key="2">
    <source>
        <dbReference type="UniProtKB" id="P02237"/>
    </source>
</evidence>
<evidence type="ECO:0000250" key="3">
    <source>
        <dbReference type="UniProtKB" id="P02240"/>
    </source>
</evidence>
<evidence type="ECO:0000250" key="4">
    <source>
        <dbReference type="UniProtKB" id="Q3C1F7"/>
    </source>
</evidence>
<evidence type="ECO:0000250" key="5">
    <source>
        <dbReference type="UniProtKB" id="Q43296"/>
    </source>
</evidence>
<evidence type="ECO:0000255" key="6">
    <source>
        <dbReference type="PROSITE-ProRule" id="PRU00238"/>
    </source>
</evidence>
<evidence type="ECO:0000269" key="7">
    <source>
    </source>
</evidence>
<evidence type="ECO:0000269" key="8">
    <source ref="3"/>
</evidence>
<evidence type="ECO:0000303" key="9">
    <source>
    </source>
</evidence>
<evidence type="ECO:0000303" key="10">
    <source ref="2"/>
</evidence>
<evidence type="ECO:0000305" key="11"/>
<dbReference type="EMBL" id="X13505">
    <property type="protein sequence ID" value="CAA31859.1"/>
    <property type="molecule type" value="Genomic_DNA"/>
</dbReference>
<dbReference type="EMBL" id="X13815">
    <property type="protein sequence ID" value="CAA32044.1"/>
    <property type="molecule type" value="Genomic_DNA"/>
</dbReference>
<dbReference type="PIR" id="S08322">
    <property type="entry name" value="GPFJG2"/>
</dbReference>
<dbReference type="PIR" id="S20162">
    <property type="entry name" value="S20162"/>
</dbReference>
<dbReference type="SMR" id="P14848"/>
<dbReference type="GO" id="GO:0005829">
    <property type="term" value="C:cytosol"/>
    <property type="evidence" value="ECO:0007669"/>
    <property type="project" value="UniProtKB-SubCell"/>
</dbReference>
<dbReference type="GO" id="GO:0005634">
    <property type="term" value="C:nucleus"/>
    <property type="evidence" value="ECO:0007669"/>
    <property type="project" value="UniProtKB-SubCell"/>
</dbReference>
<dbReference type="GO" id="GO:0020037">
    <property type="term" value="F:heme binding"/>
    <property type="evidence" value="ECO:0007669"/>
    <property type="project" value="InterPro"/>
</dbReference>
<dbReference type="GO" id="GO:0046872">
    <property type="term" value="F:metal ion binding"/>
    <property type="evidence" value="ECO:0007669"/>
    <property type="project" value="UniProtKB-KW"/>
</dbReference>
<dbReference type="GO" id="GO:0019825">
    <property type="term" value="F:oxygen binding"/>
    <property type="evidence" value="ECO:0007669"/>
    <property type="project" value="InterPro"/>
</dbReference>
<dbReference type="GO" id="GO:0005344">
    <property type="term" value="F:oxygen carrier activity"/>
    <property type="evidence" value="ECO:0007669"/>
    <property type="project" value="UniProtKB-KW"/>
</dbReference>
<dbReference type="GO" id="GO:0009877">
    <property type="term" value="P:nodulation"/>
    <property type="evidence" value="ECO:0007669"/>
    <property type="project" value="UniProtKB-KW"/>
</dbReference>
<dbReference type="CDD" id="cd08923">
    <property type="entry name" value="class1-2_nsHbs_Lbs"/>
    <property type="match status" value="1"/>
</dbReference>
<dbReference type="Gene3D" id="1.10.490.10">
    <property type="entry name" value="Globins"/>
    <property type="match status" value="1"/>
</dbReference>
<dbReference type="InterPro" id="IPR000971">
    <property type="entry name" value="Globin"/>
</dbReference>
<dbReference type="InterPro" id="IPR009050">
    <property type="entry name" value="Globin-like_sf"/>
</dbReference>
<dbReference type="InterPro" id="IPR012292">
    <property type="entry name" value="Globin/Proto"/>
</dbReference>
<dbReference type="InterPro" id="IPR001032">
    <property type="entry name" value="Leghaemoglobin-like"/>
</dbReference>
<dbReference type="InterPro" id="IPR019824">
    <property type="entry name" value="Leghaemoglobin_Fe_BS"/>
</dbReference>
<dbReference type="PANTHER" id="PTHR22924">
    <property type="entry name" value="LEGHEMOGLOBIN-RELATED"/>
    <property type="match status" value="1"/>
</dbReference>
<dbReference type="PANTHER" id="PTHR22924:SF92">
    <property type="entry name" value="NON-SYMBIOTIC HEMOGLOBIN 2"/>
    <property type="match status" value="1"/>
</dbReference>
<dbReference type="Pfam" id="PF00042">
    <property type="entry name" value="Globin"/>
    <property type="match status" value="1"/>
</dbReference>
<dbReference type="PRINTS" id="PR00188">
    <property type="entry name" value="PLANTGLOBIN"/>
</dbReference>
<dbReference type="SUPFAM" id="SSF46458">
    <property type="entry name" value="Globin-like"/>
    <property type="match status" value="1"/>
</dbReference>
<dbReference type="PROSITE" id="PS01033">
    <property type="entry name" value="GLOBIN"/>
    <property type="match status" value="1"/>
</dbReference>
<dbReference type="PROSITE" id="PS00208">
    <property type="entry name" value="PLANT_GLOBIN"/>
    <property type="match status" value="1"/>
</dbReference>
<organism>
    <name type="scientific">Sesbania rostrata</name>
    <dbReference type="NCBI Taxonomy" id="3895"/>
    <lineage>
        <taxon>Eukaryota</taxon>
        <taxon>Viridiplantae</taxon>
        <taxon>Streptophyta</taxon>
        <taxon>Embryophyta</taxon>
        <taxon>Tracheophyta</taxon>
        <taxon>Spermatophyta</taxon>
        <taxon>Magnoliopsida</taxon>
        <taxon>eudicotyledons</taxon>
        <taxon>Gunneridae</taxon>
        <taxon>Pentapetalae</taxon>
        <taxon>rosids</taxon>
        <taxon>fabids</taxon>
        <taxon>Fabales</taxon>
        <taxon>Fabaceae</taxon>
        <taxon>Papilionoideae</taxon>
        <taxon>50 kb inversion clade</taxon>
        <taxon>NPAAA clade</taxon>
        <taxon>Hologalegina</taxon>
        <taxon>robinioid clade</taxon>
        <taxon>Sesbanieae</taxon>
        <taxon>Sesbania</taxon>
    </lineage>
</organism>
<comment type="function">
    <text evidence="2 5">Leghemoglobin that reversibly binds oxygen O(2) through a pentacoordinated heme iron (By similarity). In stem nodules, facilitates the diffusion of oxygen to the bacteroids while preventing the bacterial nitrogenase from being inactivated by buffering dioxygen, nitric oxide and carbon monoxide, and promoting the formation of reactive oxygen species (ROS, e.g. H(2)O(2)) (By similarity). This role is essential for symbiotic nitrogen fixation (SNF) (By similarity).</text>
</comment>
<comment type="subunit">
    <text evidence="3">Monomer.</text>
</comment>
<comment type="subcellular location">
    <subcellularLocation>
        <location evidence="3">Cytoplasm</location>
        <location evidence="3">Cytosol</location>
    </subcellularLocation>
    <subcellularLocation>
        <location evidence="3">Nucleus</location>
    </subcellularLocation>
</comment>
<comment type="tissue specificity">
    <text evidence="7">Stem nodules.</text>
</comment>
<comment type="PTM">
    <text evidence="1">Nitrated in effective nodules and particularly in hypoxic conditions; this mechanism may play a protective role in the symbiosis by buffering toxic peroxynitrite NO(2)(-). Nitration level decrease during nodule senescence.</text>
</comment>
<comment type="PTM">
    <text evidence="4">Phosphorylation at Ser-45 disrupts the molecular environment of its porphyrin ring oxygen binding pocket, thus leading to a reduced oxygen consumption and to the delivery of oxygen O(2) to symbiosomes.</text>
</comment>
<comment type="similarity">
    <text evidence="11">Belongs to the plant globin family.</text>
</comment>
<gene>
    <name evidence="9 10" type="primary">GLB2</name>
</gene>
<feature type="initiator methionine" description="Removed" evidence="8">
    <location>
        <position position="1"/>
    </location>
</feature>
<feature type="chain" id="PRO_0000193000" description="Leghemoglobin 2">
    <location>
        <begin position="2"/>
        <end position="148"/>
    </location>
</feature>
<feature type="domain" description="Globin" evidence="6">
    <location>
        <begin position="2"/>
        <end position="148"/>
    </location>
</feature>
<feature type="binding site" evidence="3">
    <location>
        <position position="45"/>
    </location>
    <ligand>
        <name>heme b</name>
        <dbReference type="ChEBI" id="CHEBI:60344"/>
    </ligand>
</feature>
<feature type="binding site" evidence="3">
    <location>
        <position position="63"/>
    </location>
    <ligand>
        <name>O2</name>
        <dbReference type="ChEBI" id="CHEBI:15379"/>
    </ligand>
</feature>
<feature type="binding site" evidence="3">
    <location>
        <position position="66"/>
    </location>
    <ligand>
        <name>heme b</name>
        <dbReference type="ChEBI" id="CHEBI:60344"/>
    </ligand>
</feature>
<feature type="binding site" description="proximal binding residue" evidence="6">
    <location>
        <position position="95"/>
    </location>
    <ligand>
        <name>heme b</name>
        <dbReference type="ChEBI" id="CHEBI:60344"/>
    </ligand>
    <ligandPart>
        <name>Fe</name>
        <dbReference type="ChEBI" id="CHEBI:18248"/>
    </ligandPart>
</feature>
<feature type="binding site" evidence="3">
    <location>
        <position position="98"/>
    </location>
    <ligand>
        <name>heme b</name>
        <dbReference type="ChEBI" id="CHEBI:60344"/>
    </ligand>
</feature>
<feature type="modified residue" description="Nitrated tyrosine" evidence="1">
    <location>
        <position position="30"/>
    </location>
</feature>
<feature type="modified residue" description="Phosphoserine" evidence="4">
    <location>
        <position position="45"/>
    </location>
</feature>
<feature type="modified residue" description="Nitrated tyrosine" evidence="1">
    <location>
        <position position="136"/>
    </location>
</feature>
<feature type="sequence conflict" description="In Ref. 3; AA sequence." evidence="11" ref="3">
    <original>E</original>
    <variation>D</variation>
    <location>
        <position position="5"/>
    </location>
</feature>
<feature type="sequence conflict" description="In Ref. 3; AA sequence." evidence="11" ref="3">
    <original>Q</original>
    <variation>K</variation>
    <location>
        <position position="20"/>
    </location>
</feature>
<feature type="sequence conflict" description="In Ref. 3; AA sequence." evidence="11" ref="3">
    <original>N</original>
    <variation>H</variation>
    <location>
        <position position="25"/>
    </location>
</feature>
<feature type="sequence conflict" description="In Ref. 3; AA sequence." evidence="11" ref="3">
    <original>A</original>
    <variation>E</variation>
    <location>
        <position position="37"/>
    </location>
</feature>
<feature type="sequence conflict" description="In Ref. 3; AA sequence." evidence="11" ref="3">
    <original>M</original>
    <variation>L</variation>
    <location>
        <position position="43"/>
    </location>
</feature>
<feature type="sequence conflict" description="In Ref. 3; AA sequence." evidence="11" ref="3">
    <original>RDS</original>
    <variation>HDA</variation>
    <location>
        <begin position="72"/>
        <end position="74"/>
    </location>
</feature>
<feature type="sequence conflict" description="In Ref. 3; AA sequence." evidence="11" ref="3">
    <original>L</original>
    <variation>T</variation>
    <location>
        <position position="101"/>
    </location>
</feature>
<feature type="sequence conflict" description="In Ref. 3; AA sequence." evidence="11" ref="3">
    <original>N</original>
    <variation>I</variation>
    <location>
        <position position="130"/>
    </location>
</feature>
<feature type="sequence conflict" description="In Ref. 3; AA sequence." evidence="11" ref="3">
    <original>S</original>
    <variation>A</variation>
    <location>
        <position position="140"/>
    </location>
</feature>
<name>LGB2_SESRO</name>
<protein>
    <recommendedName>
        <fullName evidence="9 10">Leghemoglobin 2</fullName>
        <shortName evidence="9 10">Srglb2</shortName>
    </recommendedName>
</protein>